<comment type="function">
    <text>ATP-dependent RNA helicase involved in 40S ribosomal subunit biogenesis. Required for the processing and cleavage of 35S pre-rRNA at sites A0, A1, and A2, leading to mature 18S rRNA.</text>
</comment>
<comment type="catalytic activity">
    <reaction>
        <text>ATP + H2O = ADP + phosphate + H(+)</text>
        <dbReference type="Rhea" id="RHEA:13065"/>
        <dbReference type="ChEBI" id="CHEBI:15377"/>
        <dbReference type="ChEBI" id="CHEBI:15378"/>
        <dbReference type="ChEBI" id="CHEBI:30616"/>
        <dbReference type="ChEBI" id="CHEBI:43474"/>
        <dbReference type="ChEBI" id="CHEBI:456216"/>
        <dbReference type="EC" id="3.6.4.13"/>
    </reaction>
</comment>
<comment type="subunit">
    <text evidence="1">Associates in the nucleolus with the 60S and pre-60S ribosomal subunits.</text>
</comment>
<comment type="subcellular location">
    <subcellularLocation>
        <location evidence="1">Nucleus</location>
        <location evidence="1">Nucleolus</location>
    </subcellularLocation>
</comment>
<comment type="domain">
    <text>The Q motif is unique to and characteristic of the DEAD box family of RNA helicases and controls ATP binding and hydrolysis.</text>
</comment>
<comment type="similarity">
    <text evidence="6">Belongs to the DEAD box helicase family. DDX18/HAS1 subfamily.</text>
</comment>
<gene>
    <name type="primary">HAS1</name>
    <name type="ordered locus">CAALFM_C504750CA</name>
    <name type="ORF">CaO19.11444</name>
    <name type="ORF">CaO19.3962</name>
</gene>
<sequence>MAKTTKVKGNKKKSDTSKVVSKVSRKRSHEDSESEVEDNEKVVEELDADFDEVAGLLGDDIEDPESKSQSKKEKQKAKDEAKLEQLTKPQVSNEVPDNDNDDDSSEDVLFENADFSEPTMKAIKEMGFTKMTKVQAKTIPPLLAGRDVLGAAKTGSGKTLAFLIPAIELLYSLKIKPRNGTAVIIITPTRELALQIFGVARELMQFHSQTCGIVIGGADRRQEATKLAKGVNLLVATPGRLLDHLKNTQFVFSNLKALVIDEADRILEIGFEDEMKQIIKVLPNENRQSMLFSATQTTKVEDLARISLRPGPLYINVVPEKDVSTADGLEQGYVVCDSDKRFLLLFSFLKRNVKKKIIVFLSSCNSVKFYSELLNYIDLPVLDLHGKQKQQKRTNTFFEFCNAKQGILVCTDVAARGLDIPAVDWIVQFDPPDDPRDYIHRVGRTARGTQGKGKSLMFLTPSELGFLRYLKAAKVPLNEYEFPANKIANIQSQLTKLIKTNYLLNQSAKDGYRAYLQAYASHGLKTVYQIDKLDLKKVSASFGLDQVPRVNLSIGGTKTKKQKRS</sequence>
<dbReference type="EC" id="3.6.4.13"/>
<dbReference type="EMBL" id="CP017627">
    <property type="protein sequence ID" value="AOW29881.1"/>
    <property type="molecule type" value="Genomic_DNA"/>
</dbReference>
<dbReference type="RefSeq" id="XP_721871.1">
    <property type="nucleotide sequence ID" value="XM_716778.2"/>
</dbReference>
<dbReference type="SMR" id="Q5AK59"/>
<dbReference type="FunCoup" id="Q5AK59">
    <property type="interactions" value="1283"/>
</dbReference>
<dbReference type="STRING" id="237561.Q5AK59"/>
<dbReference type="EnsemblFungi" id="C5_04750C_A-T">
    <property type="protein sequence ID" value="C5_04750C_A-T-p1"/>
    <property type="gene ID" value="C5_04750C_A"/>
</dbReference>
<dbReference type="GeneID" id="3636443"/>
<dbReference type="KEGG" id="cal:CAALFM_C504750CA"/>
<dbReference type="CGD" id="CAL0000175982">
    <property type="gene designation" value="HAS1"/>
</dbReference>
<dbReference type="VEuPathDB" id="FungiDB:C5_04750C_A"/>
<dbReference type="eggNOG" id="KOG0342">
    <property type="taxonomic scope" value="Eukaryota"/>
</dbReference>
<dbReference type="HOGENOM" id="CLU_003041_26_5_1"/>
<dbReference type="InParanoid" id="Q5AK59"/>
<dbReference type="OrthoDB" id="10259640at2759"/>
<dbReference type="PRO" id="PR:Q5AK59"/>
<dbReference type="Proteomes" id="UP000000559">
    <property type="component" value="Chromosome 5"/>
</dbReference>
<dbReference type="GO" id="GO:0005635">
    <property type="term" value="C:nuclear envelope"/>
    <property type="evidence" value="ECO:0007669"/>
    <property type="project" value="EnsemblFungi"/>
</dbReference>
<dbReference type="GO" id="GO:0005730">
    <property type="term" value="C:nucleolus"/>
    <property type="evidence" value="ECO:0000318"/>
    <property type="project" value="GO_Central"/>
</dbReference>
<dbReference type="GO" id="GO:0030687">
    <property type="term" value="C:preribosome, large subunit precursor"/>
    <property type="evidence" value="ECO:0007669"/>
    <property type="project" value="EnsemblFungi"/>
</dbReference>
<dbReference type="GO" id="GO:0032040">
    <property type="term" value="C:small-subunit processome"/>
    <property type="evidence" value="ECO:0007669"/>
    <property type="project" value="EnsemblFungi"/>
</dbReference>
<dbReference type="GO" id="GO:0005524">
    <property type="term" value="F:ATP binding"/>
    <property type="evidence" value="ECO:0007669"/>
    <property type="project" value="UniProtKB-KW"/>
</dbReference>
<dbReference type="GO" id="GO:0016887">
    <property type="term" value="F:ATP hydrolysis activity"/>
    <property type="evidence" value="ECO:0007669"/>
    <property type="project" value="RHEA"/>
</dbReference>
<dbReference type="GO" id="GO:0042802">
    <property type="term" value="F:identical protein binding"/>
    <property type="evidence" value="ECO:0007669"/>
    <property type="project" value="EnsemblFungi"/>
</dbReference>
<dbReference type="GO" id="GO:0003723">
    <property type="term" value="F:RNA binding"/>
    <property type="evidence" value="ECO:0007669"/>
    <property type="project" value="UniProtKB-KW"/>
</dbReference>
<dbReference type="GO" id="GO:0003724">
    <property type="term" value="F:RNA helicase activity"/>
    <property type="evidence" value="ECO:0007669"/>
    <property type="project" value="UniProtKB-EC"/>
</dbReference>
<dbReference type="GO" id="GO:0000463">
    <property type="term" value="P:maturation of LSU-rRNA from tricistronic rRNA transcript (SSU-rRNA, 5.8S rRNA, LSU-rRNA)"/>
    <property type="evidence" value="ECO:0000318"/>
    <property type="project" value="GO_Central"/>
</dbReference>
<dbReference type="GO" id="GO:0000462">
    <property type="term" value="P:maturation of SSU-rRNA from tricistronic rRNA transcript (SSU-rRNA, 5.8S rRNA, LSU-rRNA)"/>
    <property type="evidence" value="ECO:0007669"/>
    <property type="project" value="EnsemblFungi"/>
</dbReference>
<dbReference type="GO" id="GO:0042274">
    <property type="term" value="P:ribosomal small subunit biogenesis"/>
    <property type="evidence" value="ECO:0000316"/>
    <property type="project" value="CGD"/>
</dbReference>
<dbReference type="GO" id="GO:1990417">
    <property type="term" value="P:snoRNA release from pre-rRNA"/>
    <property type="evidence" value="ECO:0007669"/>
    <property type="project" value="EnsemblFungi"/>
</dbReference>
<dbReference type="CDD" id="cd17942">
    <property type="entry name" value="DEADc_DDX18"/>
    <property type="match status" value="1"/>
</dbReference>
<dbReference type="CDD" id="cd18787">
    <property type="entry name" value="SF2_C_DEAD"/>
    <property type="match status" value="1"/>
</dbReference>
<dbReference type="FunFam" id="3.40.50.300:FF:000379">
    <property type="entry name" value="RNA helicase"/>
    <property type="match status" value="1"/>
</dbReference>
<dbReference type="FunFam" id="3.40.50.300:FF:000460">
    <property type="entry name" value="RNA helicase"/>
    <property type="match status" value="1"/>
</dbReference>
<dbReference type="Gene3D" id="3.40.50.300">
    <property type="entry name" value="P-loop containing nucleotide triphosphate hydrolases"/>
    <property type="match status" value="2"/>
</dbReference>
<dbReference type="InterPro" id="IPR044773">
    <property type="entry name" value="DDX18/Has1_DEADc"/>
</dbReference>
<dbReference type="InterPro" id="IPR011545">
    <property type="entry name" value="DEAD/DEAH_box_helicase_dom"/>
</dbReference>
<dbReference type="InterPro" id="IPR014001">
    <property type="entry name" value="Helicase_ATP-bd"/>
</dbReference>
<dbReference type="InterPro" id="IPR001650">
    <property type="entry name" value="Helicase_C-like"/>
</dbReference>
<dbReference type="InterPro" id="IPR027417">
    <property type="entry name" value="P-loop_NTPase"/>
</dbReference>
<dbReference type="InterPro" id="IPR000629">
    <property type="entry name" value="RNA-helicase_DEAD-box_CS"/>
</dbReference>
<dbReference type="InterPro" id="IPR014014">
    <property type="entry name" value="RNA_helicase_DEAD_Q_motif"/>
</dbReference>
<dbReference type="InterPro" id="IPR025313">
    <property type="entry name" value="SPB4-like_CTE"/>
</dbReference>
<dbReference type="PANTHER" id="PTHR24031">
    <property type="entry name" value="RNA HELICASE"/>
    <property type="match status" value="1"/>
</dbReference>
<dbReference type="Pfam" id="PF13959">
    <property type="entry name" value="CTE_SPB4"/>
    <property type="match status" value="1"/>
</dbReference>
<dbReference type="Pfam" id="PF00270">
    <property type="entry name" value="DEAD"/>
    <property type="match status" value="1"/>
</dbReference>
<dbReference type="Pfam" id="PF00271">
    <property type="entry name" value="Helicase_C"/>
    <property type="match status" value="1"/>
</dbReference>
<dbReference type="SMART" id="SM00487">
    <property type="entry name" value="DEXDc"/>
    <property type="match status" value="1"/>
</dbReference>
<dbReference type="SMART" id="SM01178">
    <property type="entry name" value="DUF4217"/>
    <property type="match status" value="1"/>
</dbReference>
<dbReference type="SMART" id="SM00490">
    <property type="entry name" value="HELICc"/>
    <property type="match status" value="1"/>
</dbReference>
<dbReference type="SUPFAM" id="SSF52540">
    <property type="entry name" value="P-loop containing nucleoside triphosphate hydrolases"/>
    <property type="match status" value="2"/>
</dbReference>
<dbReference type="PROSITE" id="PS00039">
    <property type="entry name" value="DEAD_ATP_HELICASE"/>
    <property type="match status" value="1"/>
</dbReference>
<dbReference type="PROSITE" id="PS51192">
    <property type="entry name" value="HELICASE_ATP_BIND_1"/>
    <property type="match status" value="1"/>
</dbReference>
<dbReference type="PROSITE" id="PS51194">
    <property type="entry name" value="HELICASE_CTER"/>
    <property type="match status" value="1"/>
</dbReference>
<dbReference type="PROSITE" id="PS51195">
    <property type="entry name" value="Q_MOTIF"/>
    <property type="match status" value="1"/>
</dbReference>
<feature type="chain" id="PRO_0000232207" description="ATP-dependent RNA helicase HAS1">
    <location>
        <begin position="1"/>
        <end position="565"/>
    </location>
</feature>
<feature type="domain" description="Helicase ATP-binding" evidence="3">
    <location>
        <begin position="139"/>
        <end position="314"/>
    </location>
</feature>
<feature type="domain" description="Helicase C-terminal" evidence="4">
    <location>
        <begin position="328"/>
        <end position="498"/>
    </location>
</feature>
<feature type="region of interest" description="Disordered" evidence="5">
    <location>
        <begin position="1"/>
        <end position="106"/>
    </location>
</feature>
<feature type="coiled-coil region" evidence="2">
    <location>
        <begin position="26"/>
        <end position="85"/>
    </location>
</feature>
<feature type="short sequence motif" description="Q motif">
    <location>
        <begin position="108"/>
        <end position="136"/>
    </location>
</feature>
<feature type="short sequence motif" description="DEAD box">
    <location>
        <begin position="261"/>
        <end position="264"/>
    </location>
</feature>
<feature type="short sequence motif" description="Bipartite nuclear localization signal" evidence="1">
    <location>
        <begin position="340"/>
        <end position="356"/>
    </location>
</feature>
<feature type="compositionally biased region" description="Basic residues" evidence="5">
    <location>
        <begin position="1"/>
        <end position="11"/>
    </location>
</feature>
<feature type="compositionally biased region" description="Basic and acidic residues" evidence="5">
    <location>
        <begin position="64"/>
        <end position="85"/>
    </location>
</feature>
<feature type="compositionally biased region" description="Acidic residues" evidence="5">
    <location>
        <begin position="96"/>
        <end position="106"/>
    </location>
</feature>
<feature type="binding site" evidence="3">
    <location>
        <begin position="152"/>
        <end position="159"/>
    </location>
    <ligand>
        <name>ATP</name>
        <dbReference type="ChEBI" id="CHEBI:30616"/>
    </ligand>
</feature>
<protein>
    <recommendedName>
        <fullName>ATP-dependent RNA helicase HAS1</fullName>
        <ecNumber>3.6.4.13</ecNumber>
    </recommendedName>
</protein>
<reference key="1">
    <citation type="journal article" date="2004" name="Proc. Natl. Acad. Sci. U.S.A.">
        <title>The diploid genome sequence of Candida albicans.</title>
        <authorList>
            <person name="Jones T."/>
            <person name="Federspiel N.A."/>
            <person name="Chibana H."/>
            <person name="Dungan J."/>
            <person name="Kalman S."/>
            <person name="Magee B.B."/>
            <person name="Newport G."/>
            <person name="Thorstenson Y.R."/>
            <person name="Agabian N."/>
            <person name="Magee P.T."/>
            <person name="Davis R.W."/>
            <person name="Scherer S."/>
        </authorList>
    </citation>
    <scope>NUCLEOTIDE SEQUENCE [LARGE SCALE GENOMIC DNA]</scope>
    <source>
        <strain>SC5314 / ATCC MYA-2876</strain>
    </source>
</reference>
<reference key="2">
    <citation type="journal article" date="2007" name="Genome Biol.">
        <title>Assembly of the Candida albicans genome into sixteen supercontigs aligned on the eight chromosomes.</title>
        <authorList>
            <person name="van het Hoog M."/>
            <person name="Rast T.J."/>
            <person name="Martchenko M."/>
            <person name="Grindle S."/>
            <person name="Dignard D."/>
            <person name="Hogues H."/>
            <person name="Cuomo C."/>
            <person name="Berriman M."/>
            <person name="Scherer S."/>
            <person name="Magee B.B."/>
            <person name="Whiteway M."/>
            <person name="Chibana H."/>
            <person name="Nantel A."/>
            <person name="Magee P.T."/>
        </authorList>
    </citation>
    <scope>GENOME REANNOTATION</scope>
    <source>
        <strain>SC5314 / ATCC MYA-2876</strain>
    </source>
</reference>
<reference key="3">
    <citation type="journal article" date="2013" name="Genome Biol.">
        <title>Assembly of a phased diploid Candida albicans genome facilitates allele-specific measurements and provides a simple model for repeat and indel structure.</title>
        <authorList>
            <person name="Muzzey D."/>
            <person name="Schwartz K."/>
            <person name="Weissman J.S."/>
            <person name="Sherlock G."/>
        </authorList>
    </citation>
    <scope>NUCLEOTIDE SEQUENCE [LARGE SCALE GENOMIC DNA]</scope>
    <scope>GENOME REANNOTATION</scope>
    <source>
        <strain>SC5314 / ATCC MYA-2876</strain>
    </source>
</reference>
<name>HAS1_CANAL</name>
<evidence type="ECO:0000250" key="1"/>
<evidence type="ECO:0000255" key="2"/>
<evidence type="ECO:0000255" key="3">
    <source>
        <dbReference type="PROSITE-ProRule" id="PRU00541"/>
    </source>
</evidence>
<evidence type="ECO:0000255" key="4">
    <source>
        <dbReference type="PROSITE-ProRule" id="PRU00542"/>
    </source>
</evidence>
<evidence type="ECO:0000256" key="5">
    <source>
        <dbReference type="SAM" id="MobiDB-lite"/>
    </source>
</evidence>
<evidence type="ECO:0000305" key="6"/>
<accession>Q5AK59</accession>
<accession>A0A1D8PP16</accession>
<accession>Q5AKM2</accession>
<organism>
    <name type="scientific">Candida albicans (strain SC5314 / ATCC MYA-2876)</name>
    <name type="common">Yeast</name>
    <dbReference type="NCBI Taxonomy" id="237561"/>
    <lineage>
        <taxon>Eukaryota</taxon>
        <taxon>Fungi</taxon>
        <taxon>Dikarya</taxon>
        <taxon>Ascomycota</taxon>
        <taxon>Saccharomycotina</taxon>
        <taxon>Pichiomycetes</taxon>
        <taxon>Debaryomycetaceae</taxon>
        <taxon>Candida/Lodderomyces clade</taxon>
        <taxon>Candida</taxon>
    </lineage>
</organism>
<keyword id="KW-0067">ATP-binding</keyword>
<keyword id="KW-0175">Coiled coil</keyword>
<keyword id="KW-0347">Helicase</keyword>
<keyword id="KW-0378">Hydrolase</keyword>
<keyword id="KW-0547">Nucleotide-binding</keyword>
<keyword id="KW-0539">Nucleus</keyword>
<keyword id="KW-1185">Reference proteome</keyword>
<keyword id="KW-0690">Ribosome biogenesis</keyword>
<keyword id="KW-0694">RNA-binding</keyword>
<keyword id="KW-0698">rRNA processing</keyword>
<proteinExistence type="inferred from homology"/>